<comment type="subunit">
    <text evidence="3">Interacts with FZR2/CCS52A1, FZR1/CCS52A2 and FZR3/CCS52B.</text>
</comment>
<comment type="subcellular location">
    <subcellularLocation>
        <location evidence="2">Nucleus</location>
    </subcellularLocation>
</comment>
<comment type="tissue specificity">
    <text evidence="2 4">Expressed in root tip, lateral root apex, shoot apex, leaf primordia, axillary buds, stamen and petal primordia, ovules and developing embryo.</text>
</comment>
<comment type="developmental stage">
    <text evidence="2 3 4">Expressed early in the G2 phase, reaches a peak at mitosis and then decreases. Expressed in the developing embryo up to the late-heart and early-torpedo stages.</text>
</comment>
<comment type="induction">
    <text evidence="1 4 5">By auxin and nematode infection in roots. Down-regulated by salt stress in root meristem and shoot apex.</text>
</comment>
<comment type="similarity">
    <text evidence="6">Belongs to the cyclin family. Cyclin AB subfamily.</text>
</comment>
<gene>
    <name type="primary">CYCB1-1</name>
    <name type="synonym">CYC1</name>
    <name type="ordered locus">At4g37490</name>
    <name type="ORF">F6G17.140</name>
</gene>
<protein>
    <recommendedName>
        <fullName>Cyclin-B1-1</fullName>
    </recommendedName>
    <alternativeName>
        <fullName>Cyc1-At</fullName>
    </alternativeName>
    <alternativeName>
        <fullName>G2/mitotic-specific cyclin-B1-1</fullName>
        <shortName>CycB1;1</shortName>
    </alternativeName>
</protein>
<reference key="1">
    <citation type="journal article" date="1992" name="Proc. Natl. Acad. Sci. U.S.A.">
        <title>Genes regulating the plant cell cycle: isolation of a mitotic-like cyclin from Arabidopsis thaliana.</title>
        <authorList>
            <person name="Hemerly A.S."/>
            <person name="Bergounioux C."/>
            <person name="van Montagu M."/>
            <person name="Inze D."/>
            <person name="Ferreira P.C.G."/>
        </authorList>
    </citation>
    <scope>NUCLEOTIDE SEQUENCE [MRNA]</scope>
    <scope>SUBCELLULAR LOCATION</scope>
    <scope>TISSUE SPECIFICITY</scope>
    <scope>DEVELOPMENTAL STAGE</scope>
    <source>
        <strain>cv. C24</strain>
    </source>
</reference>
<reference key="2">
    <citation type="journal article" date="1999" name="Nature">
        <title>Sequence and analysis of chromosome 4 of the plant Arabidopsis thaliana.</title>
        <authorList>
            <person name="Mayer K.F.X."/>
            <person name="Schueller C."/>
            <person name="Wambutt R."/>
            <person name="Murphy G."/>
            <person name="Volckaert G."/>
            <person name="Pohl T."/>
            <person name="Duesterhoeft A."/>
            <person name="Stiekema W."/>
            <person name="Entian K.-D."/>
            <person name="Terryn N."/>
            <person name="Harris B."/>
            <person name="Ansorge W."/>
            <person name="Brandt P."/>
            <person name="Grivell L.A."/>
            <person name="Rieger M."/>
            <person name="Weichselgartner M."/>
            <person name="de Simone V."/>
            <person name="Obermaier B."/>
            <person name="Mache R."/>
            <person name="Mueller M."/>
            <person name="Kreis M."/>
            <person name="Delseny M."/>
            <person name="Puigdomenech P."/>
            <person name="Watson M."/>
            <person name="Schmidtheini T."/>
            <person name="Reichert B."/>
            <person name="Portetelle D."/>
            <person name="Perez-Alonso M."/>
            <person name="Boutry M."/>
            <person name="Bancroft I."/>
            <person name="Vos P."/>
            <person name="Hoheisel J."/>
            <person name="Zimmermann W."/>
            <person name="Wedler H."/>
            <person name="Ridley P."/>
            <person name="Langham S.-A."/>
            <person name="McCullagh B."/>
            <person name="Bilham L."/>
            <person name="Robben J."/>
            <person name="van der Schueren J."/>
            <person name="Grymonprez B."/>
            <person name="Chuang Y.-J."/>
            <person name="Vandenbussche F."/>
            <person name="Braeken M."/>
            <person name="Weltjens I."/>
            <person name="Voet M."/>
            <person name="Bastiaens I."/>
            <person name="Aert R."/>
            <person name="Defoor E."/>
            <person name="Weitzenegger T."/>
            <person name="Bothe G."/>
            <person name="Ramsperger U."/>
            <person name="Hilbert H."/>
            <person name="Braun M."/>
            <person name="Holzer E."/>
            <person name="Brandt A."/>
            <person name="Peters S."/>
            <person name="van Staveren M."/>
            <person name="Dirkse W."/>
            <person name="Mooijman P."/>
            <person name="Klein Lankhorst R."/>
            <person name="Rose M."/>
            <person name="Hauf J."/>
            <person name="Koetter P."/>
            <person name="Berneiser S."/>
            <person name="Hempel S."/>
            <person name="Feldpausch M."/>
            <person name="Lamberth S."/>
            <person name="Van den Daele H."/>
            <person name="De Keyser A."/>
            <person name="Buysshaert C."/>
            <person name="Gielen J."/>
            <person name="Villarroel R."/>
            <person name="De Clercq R."/>
            <person name="van Montagu M."/>
            <person name="Rogers J."/>
            <person name="Cronin A."/>
            <person name="Quail M.A."/>
            <person name="Bray-Allen S."/>
            <person name="Clark L."/>
            <person name="Doggett J."/>
            <person name="Hall S."/>
            <person name="Kay M."/>
            <person name="Lennard N."/>
            <person name="McLay K."/>
            <person name="Mayes R."/>
            <person name="Pettett A."/>
            <person name="Rajandream M.A."/>
            <person name="Lyne M."/>
            <person name="Benes V."/>
            <person name="Rechmann S."/>
            <person name="Borkova D."/>
            <person name="Bloecker H."/>
            <person name="Scharfe M."/>
            <person name="Grimm M."/>
            <person name="Loehnert T.-H."/>
            <person name="Dose S."/>
            <person name="de Haan M."/>
            <person name="Maarse A.C."/>
            <person name="Schaefer M."/>
            <person name="Mueller-Auer S."/>
            <person name="Gabel C."/>
            <person name="Fuchs M."/>
            <person name="Fartmann B."/>
            <person name="Granderath K."/>
            <person name="Dauner D."/>
            <person name="Herzl A."/>
            <person name="Neumann S."/>
            <person name="Argiriou A."/>
            <person name="Vitale D."/>
            <person name="Liguori R."/>
            <person name="Piravandi E."/>
            <person name="Massenet O."/>
            <person name="Quigley F."/>
            <person name="Clabauld G."/>
            <person name="Muendlein A."/>
            <person name="Felber R."/>
            <person name="Schnabl S."/>
            <person name="Hiller R."/>
            <person name="Schmidt W."/>
            <person name="Lecharny A."/>
            <person name="Aubourg S."/>
            <person name="Chefdor F."/>
            <person name="Cooke R."/>
            <person name="Berger C."/>
            <person name="Monfort A."/>
            <person name="Casacuberta E."/>
            <person name="Gibbons T."/>
            <person name="Weber N."/>
            <person name="Vandenbol M."/>
            <person name="Bargues M."/>
            <person name="Terol J."/>
            <person name="Torres A."/>
            <person name="Perez-Perez A."/>
            <person name="Purnelle B."/>
            <person name="Bent E."/>
            <person name="Johnson S."/>
            <person name="Tacon D."/>
            <person name="Jesse T."/>
            <person name="Heijnen L."/>
            <person name="Schwarz S."/>
            <person name="Scholler P."/>
            <person name="Heber S."/>
            <person name="Francs P."/>
            <person name="Bielke C."/>
            <person name="Frishman D."/>
            <person name="Haase D."/>
            <person name="Lemcke K."/>
            <person name="Mewes H.-W."/>
            <person name="Stocker S."/>
            <person name="Zaccaria P."/>
            <person name="Bevan M."/>
            <person name="Wilson R.K."/>
            <person name="de la Bastide M."/>
            <person name="Habermann K."/>
            <person name="Parnell L."/>
            <person name="Dedhia N."/>
            <person name="Gnoj L."/>
            <person name="Schutz K."/>
            <person name="Huang E."/>
            <person name="Spiegel L."/>
            <person name="Sekhon M."/>
            <person name="Murray J."/>
            <person name="Sheet P."/>
            <person name="Cordes M."/>
            <person name="Abu-Threideh J."/>
            <person name="Stoneking T."/>
            <person name="Kalicki J."/>
            <person name="Graves T."/>
            <person name="Harmon G."/>
            <person name="Edwards J."/>
            <person name="Latreille P."/>
            <person name="Courtney L."/>
            <person name="Cloud J."/>
            <person name="Abbott A."/>
            <person name="Scott K."/>
            <person name="Johnson D."/>
            <person name="Minx P."/>
            <person name="Bentley D."/>
            <person name="Fulton B."/>
            <person name="Miller N."/>
            <person name="Greco T."/>
            <person name="Kemp K."/>
            <person name="Kramer J."/>
            <person name="Fulton L."/>
            <person name="Mardis E."/>
            <person name="Dante M."/>
            <person name="Pepin K."/>
            <person name="Hillier L.W."/>
            <person name="Nelson J."/>
            <person name="Spieth J."/>
            <person name="Ryan E."/>
            <person name="Andrews S."/>
            <person name="Geisel C."/>
            <person name="Layman D."/>
            <person name="Du H."/>
            <person name="Ali J."/>
            <person name="Berghoff A."/>
            <person name="Jones K."/>
            <person name="Drone K."/>
            <person name="Cotton M."/>
            <person name="Joshu C."/>
            <person name="Antonoiu B."/>
            <person name="Zidanic M."/>
            <person name="Strong C."/>
            <person name="Sun H."/>
            <person name="Lamar B."/>
            <person name="Yordan C."/>
            <person name="Ma P."/>
            <person name="Zhong J."/>
            <person name="Preston R."/>
            <person name="Vil D."/>
            <person name="Shekher M."/>
            <person name="Matero A."/>
            <person name="Shah R."/>
            <person name="Swaby I.K."/>
            <person name="O'Shaughnessy A."/>
            <person name="Rodriguez M."/>
            <person name="Hoffman J."/>
            <person name="Till S."/>
            <person name="Granat S."/>
            <person name="Shohdy N."/>
            <person name="Hasegawa A."/>
            <person name="Hameed A."/>
            <person name="Lodhi M."/>
            <person name="Johnson A."/>
            <person name="Chen E."/>
            <person name="Marra M.A."/>
            <person name="Martienssen R."/>
            <person name="McCombie W.R."/>
        </authorList>
    </citation>
    <scope>NUCLEOTIDE SEQUENCE [LARGE SCALE GENOMIC DNA]</scope>
    <source>
        <strain>cv. Columbia</strain>
    </source>
</reference>
<reference key="3">
    <citation type="journal article" date="2017" name="Plant J.">
        <title>Araport11: a complete reannotation of the Arabidopsis thaliana reference genome.</title>
        <authorList>
            <person name="Cheng C.Y."/>
            <person name="Krishnakumar V."/>
            <person name="Chan A.P."/>
            <person name="Thibaud-Nissen F."/>
            <person name="Schobel S."/>
            <person name="Town C.D."/>
        </authorList>
    </citation>
    <scope>GENOME REANNOTATION</scope>
    <source>
        <strain>cv. Columbia</strain>
    </source>
</reference>
<reference key="4">
    <citation type="submission" date="2006-09" db="EMBL/GenBank/DDBJ databases">
        <title>Arabidopsis ORF clones.</title>
        <authorList>
            <person name="Bautista V.R."/>
            <person name="Kim C.J."/>
            <person name="Chen H."/>
            <person name="Quinitio C."/>
            <person name="Ecker J.R."/>
        </authorList>
    </citation>
    <scope>NUCLEOTIDE SEQUENCE [LARGE SCALE MRNA]</scope>
    <source>
        <strain>cv. Columbia</strain>
    </source>
</reference>
<reference key="5">
    <citation type="journal article" date="1996" name="Plant J.">
        <title>Further progress towards a catalogue of all Arabidopsis genes: analysis of a set of 5000 non-redundant ESTs.</title>
        <authorList>
            <person name="Cooke R."/>
            <person name="Raynal M."/>
            <person name="Laudie M."/>
            <person name="Grellet F."/>
            <person name="Delseny M."/>
            <person name="Morris P.-C."/>
            <person name="Guerrier D."/>
            <person name="Giraudat J."/>
            <person name="Quigley F."/>
            <person name="Clabault G."/>
            <person name="Li Y.-F."/>
            <person name="Mache R."/>
            <person name="Krivitzky M."/>
            <person name="Gy I.J.-J."/>
            <person name="Kreis M."/>
            <person name="Lecharny A."/>
            <person name="Parmentier Y."/>
            <person name="Marbach J."/>
            <person name="Fleck J."/>
            <person name="Clement B."/>
            <person name="Philipps G."/>
            <person name="Herve C."/>
            <person name="Bardet C."/>
            <person name="Tremousaygue D."/>
            <person name="Lescure B."/>
            <person name="Lacomme C."/>
            <person name="Roby D."/>
            <person name="Jourjon M.-F."/>
            <person name="Chabrier P."/>
            <person name="Charpenteau J.-L."/>
            <person name="Desprez T."/>
            <person name="Amselem J."/>
            <person name="Chiapello H."/>
            <person name="Hoefte H."/>
        </authorList>
    </citation>
    <scope>NUCLEOTIDE SEQUENCE [LARGE SCALE MRNA] OF 6-94</scope>
    <source>
        <strain>cv. Columbia</strain>
    </source>
</reference>
<reference key="6">
    <citation type="journal article" date="1994" name="Plant Cell">
        <title>Developmental expression of the arabidopsis cyclin gene cyc1At.</title>
        <authorList>
            <person name="Ferreira P.C.G."/>
            <person name="Hemerly A.S."/>
            <person name="de Almeida Engler J."/>
            <person name="van Montagu M."/>
            <person name="Engler G."/>
            <person name="Inze D."/>
        </authorList>
    </citation>
    <scope>TISSUE SPECIFICITY</scope>
    <scope>DEVELOPMENTAL STAGE</scope>
    <scope>INDUCTION</scope>
</reference>
<reference key="7">
    <citation type="journal article" date="1996" name="Plant J.">
        <title>Induction of cdc2a and cyc1At expression in Arabidopsis thaliana during early phases of nematode-induced feeding cell formation.</title>
        <authorList>
            <person name="Niebel A."/>
            <person name="de Almeida Engler J."/>
            <person name="Hemerly A.S."/>
            <person name="Ferreira P.C.G."/>
            <person name="Inze D."/>
            <person name="van Montagu M."/>
            <person name="Gheysen G."/>
        </authorList>
    </citation>
    <scope>INDUCTION</scope>
</reference>
<reference key="8">
    <citation type="journal article" date="2000" name="Planta">
        <title>Expression of cell cycle regulatory genes and morphological alterations in response to salt stress in Arabidopsis thaliana.</title>
        <authorList>
            <person name="Burssens S."/>
            <person name="Himanen K."/>
            <person name="van de Cotte B."/>
            <person name="Beeckman T."/>
            <person name="van Montagu M."/>
            <person name="Inze D."/>
            <person name="Verbruggen N."/>
        </authorList>
    </citation>
    <scope>INDUCTION</scope>
</reference>
<reference key="9">
    <citation type="journal article" date="2004" name="Plant Physiol.">
        <title>Genome-wide analysis of the cyclin family in Arabidopsis and comparative phylogenetic analysis of plant cyclin-like proteins.</title>
        <authorList>
            <person name="Wang G."/>
            <person name="Kong H."/>
            <person name="Sun Y."/>
            <person name="Zhang X."/>
            <person name="Zhang W."/>
            <person name="Altman N."/>
            <person name="dePamphilis C.W."/>
            <person name="Ma H."/>
        </authorList>
    </citation>
    <scope>GENE FAMILY</scope>
    <scope>NOMENCLATURE</scope>
</reference>
<reference key="10">
    <citation type="journal article" date="2005" name="Cell Cycle">
        <title>Arabidopsis anaphase-promoting complexes: multiple activators and wide range of substrates might keep APC perpetually busy.</title>
        <authorList>
            <person name="Fueloep K."/>
            <person name="Tarayre S."/>
            <person name="Kelemen Z."/>
            <person name="Horvath G."/>
            <person name="Kevei Z."/>
            <person name="Nikovics K."/>
            <person name="Bako L."/>
            <person name="Brown S."/>
            <person name="Kondorosi A."/>
            <person name="Kondorosi E."/>
        </authorList>
    </citation>
    <scope>DEVELOPMENTAL STAGE</scope>
    <scope>INTERACTION WITH FZR1; FZR2 AND FZR3</scope>
</reference>
<evidence type="ECO:0000269" key="1">
    <source>
    </source>
</evidence>
<evidence type="ECO:0000269" key="2">
    <source>
    </source>
</evidence>
<evidence type="ECO:0000269" key="3">
    <source>
    </source>
</evidence>
<evidence type="ECO:0000269" key="4">
    <source>
    </source>
</evidence>
<evidence type="ECO:0000269" key="5">
    <source>
    </source>
</evidence>
<evidence type="ECO:0000305" key="6"/>
<proteinExistence type="evidence at protein level"/>
<sequence length="428" mass="48460">MMTSRSIVPQQSTDDVVVVDGKNVAKGRNRQVLGDIGNVVRGNYPKNNEPEKINHRPRTRSQNPTLLVEDNLKKPVVKRNAVPKPKKVAGKPKVVDVIEISSDSDEELGLVAAREKKATKKKATTYTSVLTARSKAACGLEKKQKEKIVDIDSADVENDLAAVEYVEDIYSFYKSVESEWRPRDYMASQPDINEKMRLILVEWLIDVHVRFELNPETFYLTVNILDRFLSVKPVPRKELQLVGLSALLMSAKYEEIWPPQVEDLVDIADHAYSHKQILVMEKTILSTLEWYLTVPTHYVFLARFIKASIADEKMENMVHYLAELGVMHYDTMIMFSPSMVAASAIYAARSSLRQVPIWTSTLKHHTGYSETQLMDCAKLLAYQQWKQQEEGSESSTKGALRKKYSKDERFAVALIPPAKALLTGTESA</sequence>
<keyword id="KW-0131">Cell cycle</keyword>
<keyword id="KW-0132">Cell division</keyword>
<keyword id="KW-0195">Cyclin</keyword>
<keyword id="KW-0539">Nucleus</keyword>
<keyword id="KW-1185">Reference proteome</keyword>
<dbReference type="EMBL" id="M80190">
    <property type="protein sequence ID" value="AAA32781.1"/>
    <property type="molecule type" value="mRNA"/>
</dbReference>
<dbReference type="EMBL" id="X62279">
    <property type="protein sequence ID" value="CAA44169.1"/>
    <property type="molecule type" value="mRNA"/>
</dbReference>
<dbReference type="EMBL" id="AL035601">
    <property type="protein sequence ID" value="CAB38216.1"/>
    <property type="molecule type" value="Genomic_DNA"/>
</dbReference>
<dbReference type="EMBL" id="AL161591">
    <property type="protein sequence ID" value="CAB80414.1"/>
    <property type="molecule type" value="Genomic_DNA"/>
</dbReference>
<dbReference type="EMBL" id="CP002687">
    <property type="protein sequence ID" value="AEE86801.1"/>
    <property type="molecule type" value="Genomic_DNA"/>
</dbReference>
<dbReference type="EMBL" id="BT029006">
    <property type="protein sequence ID" value="ABI93915.1"/>
    <property type="molecule type" value="mRNA"/>
</dbReference>
<dbReference type="EMBL" id="Z26397">
    <property type="protein sequence ID" value="CAA81236.1"/>
    <property type="molecule type" value="mRNA"/>
</dbReference>
<dbReference type="PIR" id="T04743">
    <property type="entry name" value="T04743"/>
</dbReference>
<dbReference type="RefSeq" id="NP_195465.1">
    <property type="nucleotide sequence ID" value="NM_119913.3"/>
</dbReference>
<dbReference type="SMR" id="P30183"/>
<dbReference type="BioGRID" id="15185">
    <property type="interactions" value="9"/>
</dbReference>
<dbReference type="FunCoup" id="P30183">
    <property type="interactions" value="1132"/>
</dbReference>
<dbReference type="IntAct" id="P30183">
    <property type="interactions" value="4"/>
</dbReference>
<dbReference type="STRING" id="3702.P30183"/>
<dbReference type="PaxDb" id="3702-AT4G37490.1"/>
<dbReference type="ProteomicsDB" id="223961"/>
<dbReference type="EnsemblPlants" id="AT4G37490.1">
    <property type="protein sequence ID" value="AT4G37490.1"/>
    <property type="gene ID" value="AT4G37490"/>
</dbReference>
<dbReference type="GeneID" id="829904"/>
<dbReference type="Gramene" id="AT4G37490.1">
    <property type="protein sequence ID" value="AT4G37490.1"/>
    <property type="gene ID" value="AT4G37490"/>
</dbReference>
<dbReference type="KEGG" id="ath:AT4G37490"/>
<dbReference type="Araport" id="AT4G37490"/>
<dbReference type="TAIR" id="AT4G37490">
    <property type="gene designation" value="CYCB1"/>
</dbReference>
<dbReference type="eggNOG" id="KOG0653">
    <property type="taxonomic scope" value="Eukaryota"/>
</dbReference>
<dbReference type="HOGENOM" id="CLU_020695_0_3_1"/>
<dbReference type="InParanoid" id="P30183"/>
<dbReference type="OMA" id="WLIDVHV"/>
<dbReference type="PhylomeDB" id="P30183"/>
<dbReference type="PRO" id="PR:P30183"/>
<dbReference type="Proteomes" id="UP000006548">
    <property type="component" value="Chromosome 4"/>
</dbReference>
<dbReference type="ExpressionAtlas" id="P30183">
    <property type="expression patterns" value="baseline and differential"/>
</dbReference>
<dbReference type="GO" id="GO:0005634">
    <property type="term" value="C:nucleus"/>
    <property type="evidence" value="ECO:0007669"/>
    <property type="project" value="UniProtKB-SubCell"/>
</dbReference>
<dbReference type="GO" id="GO:0016538">
    <property type="term" value="F:cyclin-dependent protein serine/threonine kinase regulator activity"/>
    <property type="evidence" value="ECO:0007669"/>
    <property type="project" value="InterPro"/>
</dbReference>
<dbReference type="GO" id="GO:0051301">
    <property type="term" value="P:cell division"/>
    <property type="evidence" value="ECO:0007669"/>
    <property type="project" value="UniProtKB-KW"/>
</dbReference>
<dbReference type="GO" id="GO:0044772">
    <property type="term" value="P:mitotic cell cycle phase transition"/>
    <property type="evidence" value="ECO:0007669"/>
    <property type="project" value="InterPro"/>
</dbReference>
<dbReference type="GO" id="GO:0001558">
    <property type="term" value="P:regulation of cell growth"/>
    <property type="evidence" value="ECO:0000315"/>
    <property type="project" value="TAIR"/>
</dbReference>
<dbReference type="GO" id="GO:0010332">
    <property type="term" value="P:response to gamma radiation"/>
    <property type="evidence" value="ECO:0000270"/>
    <property type="project" value="TAIR"/>
</dbReference>
<dbReference type="CDD" id="cd20567">
    <property type="entry name" value="CYCLIN_AtCycB-like_rpt1"/>
    <property type="match status" value="1"/>
</dbReference>
<dbReference type="CDD" id="cd20511">
    <property type="entry name" value="CYCLIN_AtCycB-like_rpt2"/>
    <property type="match status" value="1"/>
</dbReference>
<dbReference type="FunFam" id="1.10.472.10:FF:000032">
    <property type="entry name" value="G2/mitotic-specific cyclin-1"/>
    <property type="match status" value="1"/>
</dbReference>
<dbReference type="Gene3D" id="1.10.472.10">
    <property type="entry name" value="Cyclin-like"/>
    <property type="match status" value="2"/>
</dbReference>
<dbReference type="InterPro" id="IPR039361">
    <property type="entry name" value="Cyclin"/>
</dbReference>
<dbReference type="InterPro" id="IPR013763">
    <property type="entry name" value="Cyclin-like_dom"/>
</dbReference>
<dbReference type="InterPro" id="IPR036915">
    <property type="entry name" value="Cyclin-like_sf"/>
</dbReference>
<dbReference type="InterPro" id="IPR046965">
    <property type="entry name" value="Cyclin_A/B-like"/>
</dbReference>
<dbReference type="InterPro" id="IPR004367">
    <property type="entry name" value="Cyclin_C-dom"/>
</dbReference>
<dbReference type="InterPro" id="IPR006671">
    <property type="entry name" value="Cyclin_N"/>
</dbReference>
<dbReference type="InterPro" id="IPR048258">
    <property type="entry name" value="Cyclins_cyclin-box"/>
</dbReference>
<dbReference type="PANTHER" id="PTHR10177">
    <property type="entry name" value="CYCLINS"/>
    <property type="match status" value="1"/>
</dbReference>
<dbReference type="Pfam" id="PF02984">
    <property type="entry name" value="Cyclin_C"/>
    <property type="match status" value="1"/>
</dbReference>
<dbReference type="Pfam" id="PF00134">
    <property type="entry name" value="Cyclin_N"/>
    <property type="match status" value="1"/>
</dbReference>
<dbReference type="PIRSF" id="PIRSF001771">
    <property type="entry name" value="Cyclin_A_B_D_E"/>
    <property type="match status" value="1"/>
</dbReference>
<dbReference type="SMART" id="SM00385">
    <property type="entry name" value="CYCLIN"/>
    <property type="match status" value="2"/>
</dbReference>
<dbReference type="SMART" id="SM01332">
    <property type="entry name" value="Cyclin_C"/>
    <property type="match status" value="1"/>
</dbReference>
<dbReference type="SUPFAM" id="SSF47954">
    <property type="entry name" value="Cyclin-like"/>
    <property type="match status" value="2"/>
</dbReference>
<dbReference type="PROSITE" id="PS00292">
    <property type="entry name" value="CYCLINS"/>
    <property type="match status" value="1"/>
</dbReference>
<organism>
    <name type="scientific">Arabidopsis thaliana</name>
    <name type="common">Mouse-ear cress</name>
    <dbReference type="NCBI Taxonomy" id="3702"/>
    <lineage>
        <taxon>Eukaryota</taxon>
        <taxon>Viridiplantae</taxon>
        <taxon>Streptophyta</taxon>
        <taxon>Embryophyta</taxon>
        <taxon>Tracheophyta</taxon>
        <taxon>Spermatophyta</taxon>
        <taxon>Magnoliopsida</taxon>
        <taxon>eudicotyledons</taxon>
        <taxon>Gunneridae</taxon>
        <taxon>Pentapetalae</taxon>
        <taxon>rosids</taxon>
        <taxon>malvids</taxon>
        <taxon>Brassicales</taxon>
        <taxon>Brassicaceae</taxon>
        <taxon>Camelineae</taxon>
        <taxon>Arabidopsis</taxon>
    </lineage>
</organism>
<name>CCB11_ARATH</name>
<feature type="chain" id="PRO_0000080391" description="Cyclin-B1-1">
    <location>
        <begin position="1"/>
        <end position="428"/>
    </location>
</feature>
<feature type="sequence conflict" description="In Ref. 1; AAA32781/CAA44169." evidence="6" ref="1">
    <original>K</original>
    <variation>N</variation>
    <location>
        <position position="91"/>
    </location>
</feature>
<accession>P30183</accession>
<accession>Q08A73</accession>
<accession>Q42081</accession>